<proteinExistence type="inferred from homology"/>
<reference key="1">
    <citation type="journal article" date="2008" name="DNA Res.">
        <title>The whole-genome sequencing of the obligate intracellular bacterium Orientia tsutsugamushi revealed massive gene amplification during reductive genome evolution.</title>
        <authorList>
            <person name="Nakayama K."/>
            <person name="Yamashita A."/>
            <person name="Kurokawa K."/>
            <person name="Morimoto T."/>
            <person name="Ogawa M."/>
            <person name="Fukuhara M."/>
            <person name="Urakami H."/>
            <person name="Ohnishi M."/>
            <person name="Uchiyama I."/>
            <person name="Ogura Y."/>
            <person name="Ooka T."/>
            <person name="Oshima K."/>
            <person name="Tamura A."/>
            <person name="Hattori M."/>
            <person name="Hayashi T."/>
        </authorList>
    </citation>
    <scope>NUCLEOTIDE SEQUENCE [LARGE SCALE GENOMIC DNA]</scope>
    <source>
        <strain>Ikeda</strain>
    </source>
</reference>
<dbReference type="EC" id="3.1.21.10" evidence="1"/>
<dbReference type="EMBL" id="AP008981">
    <property type="protein sequence ID" value="BAG40381.1"/>
    <property type="molecule type" value="Genomic_DNA"/>
</dbReference>
<dbReference type="RefSeq" id="WP_012461508.1">
    <property type="nucleotide sequence ID" value="NC_010793.1"/>
</dbReference>
<dbReference type="SMR" id="B3CSI0"/>
<dbReference type="KEGG" id="ott:OTT_0923"/>
<dbReference type="HOGENOM" id="CLU_091257_1_0_5"/>
<dbReference type="OrthoDB" id="9805499at2"/>
<dbReference type="Proteomes" id="UP000001033">
    <property type="component" value="Chromosome"/>
</dbReference>
<dbReference type="GO" id="GO:0005737">
    <property type="term" value="C:cytoplasm"/>
    <property type="evidence" value="ECO:0007669"/>
    <property type="project" value="UniProtKB-SubCell"/>
</dbReference>
<dbReference type="GO" id="GO:0048476">
    <property type="term" value="C:Holliday junction resolvase complex"/>
    <property type="evidence" value="ECO:0007669"/>
    <property type="project" value="UniProtKB-UniRule"/>
</dbReference>
<dbReference type="GO" id="GO:0008821">
    <property type="term" value="F:crossover junction DNA endonuclease activity"/>
    <property type="evidence" value="ECO:0007669"/>
    <property type="project" value="UniProtKB-UniRule"/>
</dbReference>
<dbReference type="GO" id="GO:0003677">
    <property type="term" value="F:DNA binding"/>
    <property type="evidence" value="ECO:0007669"/>
    <property type="project" value="UniProtKB-KW"/>
</dbReference>
<dbReference type="GO" id="GO:0000287">
    <property type="term" value="F:magnesium ion binding"/>
    <property type="evidence" value="ECO:0007669"/>
    <property type="project" value="UniProtKB-UniRule"/>
</dbReference>
<dbReference type="GO" id="GO:0006310">
    <property type="term" value="P:DNA recombination"/>
    <property type="evidence" value="ECO:0007669"/>
    <property type="project" value="UniProtKB-UniRule"/>
</dbReference>
<dbReference type="GO" id="GO:0006281">
    <property type="term" value="P:DNA repair"/>
    <property type="evidence" value="ECO:0007669"/>
    <property type="project" value="UniProtKB-UniRule"/>
</dbReference>
<dbReference type="CDD" id="cd16962">
    <property type="entry name" value="RuvC"/>
    <property type="match status" value="1"/>
</dbReference>
<dbReference type="FunFam" id="3.30.420.10:FF:000002">
    <property type="entry name" value="Crossover junction endodeoxyribonuclease RuvC"/>
    <property type="match status" value="1"/>
</dbReference>
<dbReference type="Gene3D" id="3.30.420.10">
    <property type="entry name" value="Ribonuclease H-like superfamily/Ribonuclease H"/>
    <property type="match status" value="1"/>
</dbReference>
<dbReference type="HAMAP" id="MF_00034">
    <property type="entry name" value="RuvC"/>
    <property type="match status" value="1"/>
</dbReference>
<dbReference type="InterPro" id="IPR012337">
    <property type="entry name" value="RNaseH-like_sf"/>
</dbReference>
<dbReference type="InterPro" id="IPR036397">
    <property type="entry name" value="RNaseH_sf"/>
</dbReference>
<dbReference type="InterPro" id="IPR002176">
    <property type="entry name" value="X-over_junc_endoDNase_RuvC"/>
</dbReference>
<dbReference type="NCBIfam" id="TIGR00228">
    <property type="entry name" value="ruvC"/>
    <property type="match status" value="1"/>
</dbReference>
<dbReference type="PANTHER" id="PTHR30194">
    <property type="entry name" value="CROSSOVER JUNCTION ENDODEOXYRIBONUCLEASE RUVC"/>
    <property type="match status" value="1"/>
</dbReference>
<dbReference type="PANTHER" id="PTHR30194:SF3">
    <property type="entry name" value="CROSSOVER JUNCTION ENDODEOXYRIBONUCLEASE RUVC"/>
    <property type="match status" value="1"/>
</dbReference>
<dbReference type="Pfam" id="PF02075">
    <property type="entry name" value="RuvC"/>
    <property type="match status" value="1"/>
</dbReference>
<dbReference type="PRINTS" id="PR00696">
    <property type="entry name" value="RSOLVASERUVC"/>
</dbReference>
<dbReference type="SUPFAM" id="SSF53098">
    <property type="entry name" value="Ribonuclease H-like"/>
    <property type="match status" value="1"/>
</dbReference>
<protein>
    <recommendedName>
        <fullName evidence="1">Crossover junction endodeoxyribonuclease RuvC</fullName>
        <ecNumber evidence="1">3.1.21.10</ecNumber>
    </recommendedName>
    <alternativeName>
        <fullName evidence="1">Holliday junction nuclease RuvC</fullName>
    </alternativeName>
    <alternativeName>
        <fullName evidence="1">Holliday junction resolvase RuvC</fullName>
    </alternativeName>
</protein>
<comment type="function">
    <text evidence="1">The RuvA-RuvB-RuvC complex processes Holliday junction (HJ) DNA during genetic recombination and DNA repair. Endonuclease that resolves HJ intermediates. Cleaves cruciform DNA by making single-stranded nicks across the HJ at symmetrical positions within the homologous arms, yielding a 5'-phosphate and a 3'-hydroxyl group; requires a central core of homology in the junction. The consensus cleavage sequence is 5'-(A/T)TT(C/G)-3'. Cleavage occurs on the 3'-side of the TT dinucleotide at the point of strand exchange. HJ branch migration catalyzed by RuvA-RuvB allows RuvC to scan DNA until it finds its consensus sequence, where it cleaves and resolves the cruciform DNA.</text>
</comment>
<comment type="catalytic activity">
    <reaction evidence="1">
        <text>Endonucleolytic cleavage at a junction such as a reciprocal single-stranded crossover between two homologous DNA duplexes (Holliday junction).</text>
        <dbReference type="EC" id="3.1.21.10"/>
    </reaction>
</comment>
<comment type="cofactor">
    <cofactor evidence="1">
        <name>Mg(2+)</name>
        <dbReference type="ChEBI" id="CHEBI:18420"/>
    </cofactor>
    <text evidence="1">Binds 2 Mg(2+) ion per subunit.</text>
</comment>
<comment type="subunit">
    <text evidence="1">Homodimer which binds Holliday junction (HJ) DNA. The HJ becomes 2-fold symmetrical on binding to RuvC with unstacked arms; it has a different conformation from HJ DNA in complex with RuvA. In the full resolvosome a probable DNA-RuvA(4)-RuvB(12)-RuvC(2) complex forms which resolves the HJ.</text>
</comment>
<comment type="subcellular location">
    <subcellularLocation>
        <location evidence="1">Cytoplasm</location>
    </subcellularLocation>
</comment>
<comment type="similarity">
    <text evidence="1">Belongs to the RuvC family.</text>
</comment>
<accession>B3CSI0</accession>
<keyword id="KW-0963">Cytoplasm</keyword>
<keyword id="KW-0227">DNA damage</keyword>
<keyword id="KW-0233">DNA recombination</keyword>
<keyword id="KW-0234">DNA repair</keyword>
<keyword id="KW-0238">DNA-binding</keyword>
<keyword id="KW-0255">Endonuclease</keyword>
<keyword id="KW-0378">Hydrolase</keyword>
<keyword id="KW-0460">Magnesium</keyword>
<keyword id="KW-0479">Metal-binding</keyword>
<keyword id="KW-0540">Nuclease</keyword>
<name>RUVC_ORITI</name>
<organism>
    <name type="scientific">Orientia tsutsugamushi (strain Ikeda)</name>
    <name type="common">Rickettsia tsutsugamushi</name>
    <dbReference type="NCBI Taxonomy" id="334380"/>
    <lineage>
        <taxon>Bacteria</taxon>
        <taxon>Pseudomonadati</taxon>
        <taxon>Pseudomonadota</taxon>
        <taxon>Alphaproteobacteria</taxon>
        <taxon>Rickettsiales</taxon>
        <taxon>Rickettsiaceae</taxon>
        <taxon>Rickettsieae</taxon>
        <taxon>Orientia</taxon>
    </lineage>
</organism>
<gene>
    <name evidence="1" type="primary">ruvC</name>
    <name type="ordered locus">OTT_0923</name>
</gene>
<evidence type="ECO:0000255" key="1">
    <source>
        <dbReference type="HAMAP-Rule" id="MF_00034"/>
    </source>
</evidence>
<sequence>MIILGIDPSLVSTGWGVISISGSIVNYIDSGVIKTVSKDSLVLKLGNISLMIEKLITRFNPFHVAMEEVFINKNYSSSVTLIQARGAIMSVIGRYNIDFSEYAPNKIKKAIVGAGKAEKHQVQQMVKLLMHIKKAISKDESDALATAYTASVNHQIKII</sequence>
<feature type="chain" id="PRO_1000090543" description="Crossover junction endodeoxyribonuclease RuvC">
    <location>
        <begin position="1"/>
        <end position="159"/>
    </location>
</feature>
<feature type="active site" evidence="1">
    <location>
        <position position="7"/>
    </location>
</feature>
<feature type="active site" evidence="1">
    <location>
        <position position="67"/>
    </location>
</feature>
<feature type="active site" evidence="1">
    <location>
        <position position="139"/>
    </location>
</feature>
<feature type="binding site" evidence="1">
    <location>
        <position position="7"/>
    </location>
    <ligand>
        <name>Mg(2+)</name>
        <dbReference type="ChEBI" id="CHEBI:18420"/>
        <label>1</label>
    </ligand>
</feature>
<feature type="binding site" evidence="1">
    <location>
        <position position="67"/>
    </location>
    <ligand>
        <name>Mg(2+)</name>
        <dbReference type="ChEBI" id="CHEBI:18420"/>
        <label>2</label>
    </ligand>
</feature>
<feature type="binding site" evidence="1">
    <location>
        <position position="139"/>
    </location>
    <ligand>
        <name>Mg(2+)</name>
        <dbReference type="ChEBI" id="CHEBI:18420"/>
        <label>1</label>
    </ligand>
</feature>